<evidence type="ECO:0000250" key="1"/>
<evidence type="ECO:0000255" key="2">
    <source>
        <dbReference type="PROSITE-ProRule" id="PRU01251"/>
    </source>
</evidence>
<evidence type="ECO:0000256" key="3">
    <source>
        <dbReference type="SAM" id="MobiDB-lite"/>
    </source>
</evidence>
<evidence type="ECO:0000305" key="4"/>
<reference key="1">
    <citation type="journal article" date="2004" name="Science">
        <title>A predator unmasked: life cycle of Bdellovibrio bacteriovorus from a genomic perspective.</title>
        <authorList>
            <person name="Rendulic S."/>
            <person name="Jagtap P."/>
            <person name="Rosinus A."/>
            <person name="Eppinger M."/>
            <person name="Baar C."/>
            <person name="Lanz C."/>
            <person name="Keller H."/>
            <person name="Lambert C."/>
            <person name="Evans K.J."/>
            <person name="Goesmann A."/>
            <person name="Meyer F."/>
            <person name="Sockett R.E."/>
            <person name="Schuster S.C."/>
        </authorList>
    </citation>
    <scope>NUCLEOTIDE SEQUENCE [LARGE SCALE GENOMIC DNA]</scope>
    <source>
        <strain>ATCC 15356 / DSM 50701 / NCIMB 9529 / HD100</strain>
    </source>
</reference>
<dbReference type="EMBL" id="BX842654">
    <property type="protein sequence ID" value="CAE80813.1"/>
    <property type="molecule type" value="Genomic_DNA"/>
</dbReference>
<dbReference type="SMR" id="Q6MIV0"/>
<dbReference type="STRING" id="264462.Bd3048"/>
<dbReference type="KEGG" id="bba:Bd3048"/>
<dbReference type="eggNOG" id="COG0542">
    <property type="taxonomic scope" value="Bacteria"/>
</dbReference>
<dbReference type="HOGENOM" id="CLU_005070_4_0_7"/>
<dbReference type="Proteomes" id="UP000008080">
    <property type="component" value="Chromosome"/>
</dbReference>
<dbReference type="GO" id="GO:0005737">
    <property type="term" value="C:cytoplasm"/>
    <property type="evidence" value="ECO:0007669"/>
    <property type="project" value="UniProtKB-SubCell"/>
</dbReference>
<dbReference type="GO" id="GO:0005524">
    <property type="term" value="F:ATP binding"/>
    <property type="evidence" value="ECO:0007669"/>
    <property type="project" value="UniProtKB-KW"/>
</dbReference>
<dbReference type="GO" id="GO:0016887">
    <property type="term" value="F:ATP hydrolysis activity"/>
    <property type="evidence" value="ECO:0007669"/>
    <property type="project" value="InterPro"/>
</dbReference>
<dbReference type="GO" id="GO:0034605">
    <property type="term" value="P:cellular response to heat"/>
    <property type="evidence" value="ECO:0007669"/>
    <property type="project" value="TreeGrafter"/>
</dbReference>
<dbReference type="GO" id="GO:0042026">
    <property type="term" value="P:protein refolding"/>
    <property type="evidence" value="ECO:0007669"/>
    <property type="project" value="InterPro"/>
</dbReference>
<dbReference type="CDD" id="cd00009">
    <property type="entry name" value="AAA"/>
    <property type="match status" value="1"/>
</dbReference>
<dbReference type="CDD" id="cd19499">
    <property type="entry name" value="RecA-like_ClpB_Hsp104-like"/>
    <property type="match status" value="1"/>
</dbReference>
<dbReference type="FunFam" id="3.40.50.300:FF:000120">
    <property type="entry name" value="ATP-dependent chaperone ClpB"/>
    <property type="match status" value="1"/>
</dbReference>
<dbReference type="FunFam" id="3.40.50.300:FF:000025">
    <property type="entry name" value="ATP-dependent Clp protease subunit"/>
    <property type="match status" value="1"/>
</dbReference>
<dbReference type="FunFam" id="3.40.50.300:FF:000010">
    <property type="entry name" value="Chaperone clpB 1, putative"/>
    <property type="match status" value="1"/>
</dbReference>
<dbReference type="Gene3D" id="1.10.8.60">
    <property type="match status" value="1"/>
</dbReference>
<dbReference type="Gene3D" id="1.10.1780.10">
    <property type="entry name" value="Clp, N-terminal domain"/>
    <property type="match status" value="1"/>
</dbReference>
<dbReference type="Gene3D" id="3.40.50.300">
    <property type="entry name" value="P-loop containing nucleotide triphosphate hydrolases"/>
    <property type="match status" value="3"/>
</dbReference>
<dbReference type="InterPro" id="IPR003593">
    <property type="entry name" value="AAA+_ATPase"/>
</dbReference>
<dbReference type="InterPro" id="IPR003959">
    <property type="entry name" value="ATPase_AAA_core"/>
</dbReference>
<dbReference type="InterPro" id="IPR017730">
    <property type="entry name" value="Chaperonin_ClpB"/>
</dbReference>
<dbReference type="InterPro" id="IPR019489">
    <property type="entry name" value="Clp_ATPase_C"/>
</dbReference>
<dbReference type="InterPro" id="IPR036628">
    <property type="entry name" value="Clp_N_dom_sf"/>
</dbReference>
<dbReference type="InterPro" id="IPR004176">
    <property type="entry name" value="Clp_R_dom"/>
</dbReference>
<dbReference type="InterPro" id="IPR001270">
    <property type="entry name" value="ClpA/B"/>
</dbReference>
<dbReference type="InterPro" id="IPR018368">
    <property type="entry name" value="ClpA/B_CS1"/>
</dbReference>
<dbReference type="InterPro" id="IPR028299">
    <property type="entry name" value="ClpA/B_CS2"/>
</dbReference>
<dbReference type="InterPro" id="IPR041546">
    <property type="entry name" value="ClpA/ClpB_AAA_lid"/>
</dbReference>
<dbReference type="InterPro" id="IPR050130">
    <property type="entry name" value="ClpA_ClpB"/>
</dbReference>
<dbReference type="InterPro" id="IPR027417">
    <property type="entry name" value="P-loop_NTPase"/>
</dbReference>
<dbReference type="NCBIfam" id="TIGR03346">
    <property type="entry name" value="chaperone_ClpB"/>
    <property type="match status" value="1"/>
</dbReference>
<dbReference type="PANTHER" id="PTHR11638">
    <property type="entry name" value="ATP-DEPENDENT CLP PROTEASE"/>
    <property type="match status" value="1"/>
</dbReference>
<dbReference type="PANTHER" id="PTHR11638:SF18">
    <property type="entry name" value="HEAT SHOCK PROTEIN 104"/>
    <property type="match status" value="1"/>
</dbReference>
<dbReference type="Pfam" id="PF00004">
    <property type="entry name" value="AAA"/>
    <property type="match status" value="1"/>
</dbReference>
<dbReference type="Pfam" id="PF07724">
    <property type="entry name" value="AAA_2"/>
    <property type="match status" value="1"/>
</dbReference>
<dbReference type="Pfam" id="PF17871">
    <property type="entry name" value="AAA_lid_9"/>
    <property type="match status" value="1"/>
</dbReference>
<dbReference type="Pfam" id="PF02861">
    <property type="entry name" value="Clp_N"/>
    <property type="match status" value="2"/>
</dbReference>
<dbReference type="Pfam" id="PF10431">
    <property type="entry name" value="ClpB_D2-small"/>
    <property type="match status" value="1"/>
</dbReference>
<dbReference type="PRINTS" id="PR00300">
    <property type="entry name" value="CLPPROTEASEA"/>
</dbReference>
<dbReference type="SMART" id="SM00382">
    <property type="entry name" value="AAA"/>
    <property type="match status" value="2"/>
</dbReference>
<dbReference type="SMART" id="SM01086">
    <property type="entry name" value="ClpB_D2-small"/>
    <property type="match status" value="1"/>
</dbReference>
<dbReference type="SUPFAM" id="SSF81923">
    <property type="entry name" value="Double Clp-N motif"/>
    <property type="match status" value="1"/>
</dbReference>
<dbReference type="SUPFAM" id="SSF52540">
    <property type="entry name" value="P-loop containing nucleoside triphosphate hydrolases"/>
    <property type="match status" value="2"/>
</dbReference>
<dbReference type="PROSITE" id="PS51903">
    <property type="entry name" value="CLP_R"/>
    <property type="match status" value="1"/>
</dbReference>
<dbReference type="PROSITE" id="PS00870">
    <property type="entry name" value="CLPAB_1"/>
    <property type="match status" value="1"/>
</dbReference>
<dbReference type="PROSITE" id="PS00871">
    <property type="entry name" value="CLPAB_2"/>
    <property type="match status" value="1"/>
</dbReference>
<organism>
    <name type="scientific">Bdellovibrio bacteriovorus (strain ATCC 15356 / DSM 50701 / NCIMB 9529 / HD100)</name>
    <dbReference type="NCBI Taxonomy" id="264462"/>
    <lineage>
        <taxon>Bacteria</taxon>
        <taxon>Pseudomonadati</taxon>
        <taxon>Bdellovibrionota</taxon>
        <taxon>Bdellovibrionia</taxon>
        <taxon>Bdellovibrionales</taxon>
        <taxon>Pseudobdellovibrionaceae</taxon>
        <taxon>Bdellovibrio</taxon>
    </lineage>
</organism>
<sequence length="855" mass="95239">MTRKSQEAMQAAARLAERKSSPSVEPEHLLMELVQQTEGIVPRILDKLNVPQAQFLAELRTKIDKFPQVTGGGQKMFASPRLEKIFQAAETEAQEWGDSYISTEHFFMAMLKGGDSELNGLFKKNKVTAEAARTALTEIRGKQKVTDDDPENKYEVLNKYARDLTALAAEGKLDPVVGRDEEIRRVVQVLSRRTKNNPVLIGEPGVGKTAIAEGLALRIIKQDVPDNLIGKKLMSLDMGALIAGAKYRGEFEDRLKAVIKEVTSSDGQIILFIDELHTLVGAGKTEGAMDAGQLLKPALARGELRCIGATTLDEYRKYIEKDAALERRFQTVMVEEPSVEDAITILRGLKEKYEVHHGIRITDAALVSAVKLSHRYITNRFLPDKAIDLIDEAASKLGIETRSVPEEVDKIERELMQLRIEKEALKKEKDESARERLAVIDKEITELNAKNQLLREQWEFEKGGIEGIKKLKADIEDLKVAVAKAEREGDLGKAAELKYGKLPEAEKKLKALEERSKEGAKSSSENRMLKEEVGPEDVAEVVAKWTGIPVSKMLESESQKLLHMEDSLKHRVVGQDHALTIVADAIRRARAEISDPNRPIGTFMFLGPTGVGKTETVKALAEFLFDDEQAVVRIDMSEYMEKHAVSRLIGAPPGYVGYEEGGQLTESVRRRPYSVVLLDEVEKAHPDVFNILLQVLDDGRLTDGQGRTVDFKNTVLIMTSNVGSQSILDPGMSENQKREAVNEALRERFRPEFLNRIDEIVMFKSLGEAQISGIVKVQLDLVAQRLRAKKIGIDFNQEAIDFLAKKGYDPIYGARPLKRVIQTELLNPLSKEIISGKVKAGDTIHVKANGSTLTF</sequence>
<feature type="chain" id="PRO_0000191093" description="Chaperone protein ClpB">
    <location>
        <begin position="1"/>
        <end position="855"/>
    </location>
</feature>
<feature type="domain" description="Clp R" evidence="2">
    <location>
        <begin position="1"/>
        <end position="142"/>
    </location>
</feature>
<feature type="region of interest" description="Repeat 1" evidence="2">
    <location>
        <begin position="1"/>
        <end position="66"/>
    </location>
</feature>
<feature type="region of interest" description="Disordered" evidence="3">
    <location>
        <begin position="1"/>
        <end position="22"/>
    </location>
</feature>
<feature type="region of interest" description="Repeat 2" evidence="2">
    <location>
        <begin position="78"/>
        <end position="142"/>
    </location>
</feature>
<feature type="region of interest" description="NBD1" evidence="1">
    <location>
        <begin position="155"/>
        <end position="336"/>
    </location>
</feature>
<feature type="region of interest" description="Linker" evidence="1">
    <location>
        <begin position="337"/>
        <end position="547"/>
    </location>
</feature>
<feature type="region of interest" description="Disordered" evidence="3">
    <location>
        <begin position="513"/>
        <end position="532"/>
    </location>
</feature>
<feature type="region of interest" description="NBD2" evidence="1">
    <location>
        <begin position="557"/>
        <end position="765"/>
    </location>
</feature>
<feature type="region of interest" description="C-terminal" evidence="1">
    <location>
        <begin position="766"/>
        <end position="855"/>
    </location>
</feature>
<feature type="coiled-coil region" evidence="1">
    <location>
        <begin position="387"/>
        <end position="521"/>
    </location>
</feature>
<feature type="binding site" evidence="1">
    <location>
        <begin position="202"/>
        <end position="209"/>
    </location>
    <ligand>
        <name>ATP</name>
        <dbReference type="ChEBI" id="CHEBI:30616"/>
        <label>1</label>
    </ligand>
</feature>
<feature type="binding site" evidence="1">
    <location>
        <begin position="607"/>
        <end position="614"/>
    </location>
    <ligand>
        <name>ATP</name>
        <dbReference type="ChEBI" id="CHEBI:30616"/>
        <label>2</label>
    </ligand>
</feature>
<comment type="function">
    <text evidence="1">Part of a stress-induced multi-chaperone system, it is involved in the recovery of the cell from heat-induced damage, in cooperation with DnaK, DnaJ and GrpE. Acts before DnaK, in the processing of protein aggregates. Protein binding stimulates the ATPase activity; ATP hydrolysis unfolds the denatured protein aggregates, which probably helps expose new hydrophobic binding sites on the surface of ClpB-bound aggregates, contributing to the solubilization and refolding of denatured protein aggregates by DnaK (By similarity).</text>
</comment>
<comment type="subunit">
    <text evidence="1">Homohexamer. The oligomerization is ATP-dependent (By similarity).</text>
</comment>
<comment type="subcellular location">
    <subcellularLocation>
        <location evidence="4">Cytoplasm</location>
    </subcellularLocation>
</comment>
<comment type="domain">
    <text evidence="1">The Clp repeat (R) domain probably functions as a substrate-discriminating domain, recruiting aggregated proteins to the ClpB hexamer and/or stabilizing bound proteins. The NBD2 domain is responsible for oligomerization, whereas the NBD1 domain stabilizes the hexamer probably in an ATP-dependent manner. The movement of the coiled-coil domain is essential for ClpB ability to rescue proteins from an aggregated state, probably by pulling apart large aggregated proteins, which are bound between the coiled-coils motifs of adjacent ClpB subunits in the functional hexamer (By similarity).</text>
</comment>
<comment type="similarity">
    <text evidence="4">Belongs to the ClpA/ClpB family.</text>
</comment>
<proteinExistence type="inferred from homology"/>
<accession>Q6MIV0</accession>
<name>CLPB_BDEBA</name>
<gene>
    <name type="primary">clpB</name>
    <name type="ordered locus">Bd3048</name>
</gene>
<keyword id="KW-0067">ATP-binding</keyword>
<keyword id="KW-0143">Chaperone</keyword>
<keyword id="KW-0175">Coiled coil</keyword>
<keyword id="KW-0963">Cytoplasm</keyword>
<keyword id="KW-0547">Nucleotide-binding</keyword>
<keyword id="KW-1185">Reference proteome</keyword>
<keyword id="KW-0677">Repeat</keyword>
<keyword id="KW-0346">Stress response</keyword>
<protein>
    <recommendedName>
        <fullName>Chaperone protein ClpB</fullName>
    </recommendedName>
</protein>